<gene>
    <name type="primary">CDC123</name>
    <name type="ORF">SNOG_01574</name>
</gene>
<evidence type="ECO:0000250" key="1"/>
<evidence type="ECO:0000256" key="2">
    <source>
        <dbReference type="SAM" id="MobiDB-lite"/>
    </source>
</evidence>
<evidence type="ECO:0000305" key="3"/>
<dbReference type="EMBL" id="CH445326">
    <property type="protein sequence ID" value="EAT91223.2"/>
    <property type="molecule type" value="Genomic_DNA"/>
</dbReference>
<dbReference type="RefSeq" id="XP_001792211.1">
    <property type="nucleotide sequence ID" value="XM_001792159.1"/>
</dbReference>
<dbReference type="SMR" id="Q0V340"/>
<dbReference type="FunCoup" id="Q0V340">
    <property type="interactions" value="700"/>
</dbReference>
<dbReference type="STRING" id="321614.Q0V340"/>
<dbReference type="EnsemblFungi" id="SNOT_01574">
    <property type="protein sequence ID" value="SNOT_01574"/>
    <property type="gene ID" value="SNOG_01574"/>
</dbReference>
<dbReference type="GeneID" id="5969056"/>
<dbReference type="KEGG" id="pno:SNOG_01574"/>
<dbReference type="VEuPathDB" id="FungiDB:JI435_015740"/>
<dbReference type="eggNOG" id="KOG2983">
    <property type="taxonomic scope" value="Eukaryota"/>
</dbReference>
<dbReference type="HOGENOM" id="CLU_034402_2_0_1"/>
<dbReference type="InParanoid" id="Q0V340"/>
<dbReference type="Proteomes" id="UP000001055">
    <property type="component" value="Unassembled WGS sequence"/>
</dbReference>
<dbReference type="GO" id="GO:0005737">
    <property type="term" value="C:cytoplasm"/>
    <property type="evidence" value="ECO:0000318"/>
    <property type="project" value="GO_Central"/>
</dbReference>
<dbReference type="GO" id="GO:0005524">
    <property type="term" value="F:ATP binding"/>
    <property type="evidence" value="ECO:0007669"/>
    <property type="project" value="EnsemblFungi"/>
</dbReference>
<dbReference type="GO" id="GO:0000287">
    <property type="term" value="F:magnesium ion binding"/>
    <property type="evidence" value="ECO:0007669"/>
    <property type="project" value="EnsemblFungi"/>
</dbReference>
<dbReference type="GO" id="GO:0044183">
    <property type="term" value="F:protein folding chaperone"/>
    <property type="evidence" value="ECO:0007669"/>
    <property type="project" value="EnsemblFungi"/>
</dbReference>
<dbReference type="GO" id="GO:0051301">
    <property type="term" value="P:cell division"/>
    <property type="evidence" value="ECO:0007669"/>
    <property type="project" value="UniProtKB-KW"/>
</dbReference>
<dbReference type="GO" id="GO:1905143">
    <property type="term" value="P:eukaryotic translation initiation factor 2 complex assembly"/>
    <property type="evidence" value="ECO:0007669"/>
    <property type="project" value="EnsemblFungi"/>
</dbReference>
<dbReference type="InterPro" id="IPR009772">
    <property type="entry name" value="CDC123"/>
</dbReference>
<dbReference type="PANTHER" id="PTHR15323:SF6">
    <property type="entry name" value="CELL DIVISION CYCLE PROTEIN 123 HOMOLOG"/>
    <property type="match status" value="1"/>
</dbReference>
<dbReference type="PANTHER" id="PTHR15323">
    <property type="entry name" value="D123 PROTEIN"/>
    <property type="match status" value="1"/>
</dbReference>
<dbReference type="Pfam" id="PF07065">
    <property type="entry name" value="D123"/>
    <property type="match status" value="1"/>
</dbReference>
<proteinExistence type="inferred from homology"/>
<sequence>MANIENRVHWVILTLPRYRAVTPKARLVPLPAAFLDYLRSDGIILPPEDGDNPTWSDNDSGIFSGADNNDEDDEAAADPSVDWRDTHEAIERTIEELGGKVAPKLNWSAPKDATWMNATNSMECRTPNDIYLLLKSSDFVTHDLAHAFDDTADQSSEDDQEIPYHLVLRKWITLNPSVEFRCFVRDRRLIALCQRDLNHFDFLFNMQDKLRNAVQDFFELRLRNTFPDPNFTFDVYVPPPHDKVWLVDVNPWALRTDPLLFSWMELLTMDVPDVEQEETTVRLRLAQPGSSGRTGADESSGADDSEDDDIEEIWQPEFRLVRRDDPEAYGFATPQYSAHKLPKDVVDASKDGGGGMREFAQQWEEAQRLAEQQRAEDSETD</sequence>
<feature type="chain" id="PRO_0000350947" description="Cell division cycle protein 123">
    <location>
        <begin position="1"/>
        <end position="381"/>
    </location>
</feature>
<feature type="region of interest" description="Disordered" evidence="2">
    <location>
        <begin position="48"/>
        <end position="79"/>
    </location>
</feature>
<feature type="region of interest" description="Disordered" evidence="2">
    <location>
        <begin position="279"/>
        <end position="309"/>
    </location>
</feature>
<feature type="compositionally biased region" description="Acidic residues" evidence="2">
    <location>
        <begin position="300"/>
        <end position="309"/>
    </location>
</feature>
<protein>
    <recommendedName>
        <fullName>Cell division cycle protein 123</fullName>
    </recommendedName>
</protein>
<name>CD123_PHANO</name>
<comment type="function">
    <text evidence="1">Regulates the cell cycle in a nutrient dependent manner.</text>
</comment>
<comment type="subcellular location">
    <subcellularLocation>
        <location evidence="1">Cytoplasm</location>
    </subcellularLocation>
</comment>
<comment type="similarity">
    <text evidence="3">Belongs to the CDC123 family.</text>
</comment>
<reference key="1">
    <citation type="journal article" date="2007" name="Plant Cell">
        <title>Dothideomycete-plant interactions illuminated by genome sequencing and EST analysis of the wheat pathogen Stagonospora nodorum.</title>
        <authorList>
            <person name="Hane J.K."/>
            <person name="Lowe R.G.T."/>
            <person name="Solomon P.S."/>
            <person name="Tan K.-C."/>
            <person name="Schoch C.L."/>
            <person name="Spatafora J.W."/>
            <person name="Crous P.W."/>
            <person name="Kodira C.D."/>
            <person name="Birren B.W."/>
            <person name="Galagan J.E."/>
            <person name="Torriani S.F.F."/>
            <person name="McDonald B.A."/>
            <person name="Oliver R.P."/>
        </authorList>
    </citation>
    <scope>NUCLEOTIDE SEQUENCE [LARGE SCALE GENOMIC DNA]</scope>
    <source>
        <strain>SN15 / ATCC MYA-4574 / FGSC 10173</strain>
    </source>
</reference>
<organism>
    <name type="scientific">Phaeosphaeria nodorum (strain SN15 / ATCC MYA-4574 / FGSC 10173)</name>
    <name type="common">Glume blotch fungus</name>
    <name type="synonym">Parastagonospora nodorum</name>
    <dbReference type="NCBI Taxonomy" id="321614"/>
    <lineage>
        <taxon>Eukaryota</taxon>
        <taxon>Fungi</taxon>
        <taxon>Dikarya</taxon>
        <taxon>Ascomycota</taxon>
        <taxon>Pezizomycotina</taxon>
        <taxon>Dothideomycetes</taxon>
        <taxon>Pleosporomycetidae</taxon>
        <taxon>Pleosporales</taxon>
        <taxon>Pleosporineae</taxon>
        <taxon>Phaeosphaeriaceae</taxon>
        <taxon>Parastagonospora</taxon>
    </lineage>
</organism>
<keyword id="KW-0131">Cell cycle</keyword>
<keyword id="KW-0132">Cell division</keyword>
<keyword id="KW-0963">Cytoplasm</keyword>
<accession>Q0V340</accession>